<keyword id="KW-0998">Cell outer membrane</keyword>
<keyword id="KW-0472">Membrane</keyword>
<keyword id="KW-0574">Periplasm</keyword>
<keyword id="KW-0964">Secreted</keyword>
<keyword id="KW-0732">Signal</keyword>
<keyword id="KW-0800">Toxin</keyword>
<keyword id="KW-0812">Transmembrane</keyword>
<keyword id="KW-1134">Transmembrane beta strand</keyword>
<keyword id="KW-0843">Virulence</keyword>
<feature type="signal peptide" evidence="2">
    <location>
        <begin position="1"/>
        <end position="33"/>
    </location>
</feature>
<feature type="chain" id="PRO_0000387585" description="Vacuolating cytotoxin autotransporter">
    <location>
        <begin position="34"/>
        <end position="1288"/>
    </location>
</feature>
<feature type="chain" id="PRO_0000022649" description="Vacuolating cytotoxin">
    <location>
        <begin position="34"/>
        <end status="unknown"/>
    </location>
</feature>
<feature type="chain" id="PRO_0000022650" description="Vacuolating cytotoxin translocator" evidence="2">
    <location>
        <begin status="unknown"/>
        <end position="1288"/>
    </location>
</feature>
<feature type="domain" description="Autotransporter" evidence="3">
    <location>
        <begin position="1015"/>
        <end position="1288"/>
    </location>
</feature>
<feature type="region of interest" description="Disordered" evidence="4">
    <location>
        <begin position="326"/>
        <end position="377"/>
    </location>
</feature>
<feature type="compositionally biased region" description="Polar residues" evidence="4">
    <location>
        <begin position="352"/>
        <end position="376"/>
    </location>
</feature>
<accession>Q9ZKW5</accession>
<reference key="1">
    <citation type="journal article" date="1999" name="Nature">
        <title>Genomic sequence comparison of two unrelated isolates of the human gastric pathogen Helicobacter pylori.</title>
        <authorList>
            <person name="Alm R.A."/>
            <person name="Ling L.-S.L."/>
            <person name="Moir D.T."/>
            <person name="King B.L."/>
            <person name="Brown E.D."/>
            <person name="Doig P.C."/>
            <person name="Smith D.R."/>
            <person name="Noonan B."/>
            <person name="Guild B.C."/>
            <person name="deJonge B.L."/>
            <person name="Carmel G."/>
            <person name="Tummino P.J."/>
            <person name="Caruso A."/>
            <person name="Uria-Nickelsen M."/>
            <person name="Mills D.M."/>
            <person name="Ives C."/>
            <person name="Gibson R."/>
            <person name="Merberg D."/>
            <person name="Mills S.D."/>
            <person name="Jiang Q."/>
            <person name="Taylor D.E."/>
            <person name="Vovis G.F."/>
            <person name="Trust T.J."/>
        </authorList>
    </citation>
    <scope>NUCLEOTIDE SEQUENCE [LARGE SCALE GENOMIC DNA]</scope>
    <source>
        <strain>J99 / ATCC 700824</strain>
    </source>
</reference>
<proteinExistence type="inferred from homology"/>
<sequence>MEIQQTHRKINRPLVSLVLAGALISAIPQESHAAFFTTVIIPAIVGGIATGTAVGTVSGLLSWGLKQAEEANKTPDKPDKVWRIQAGKGFNEFPNKEYDLYKSLLSSKIDGGWDWGNAARHYWVKGGQWNKLEVDMKDAVGTYKLSGLRNFTGGDLDVNMQKATLRLGQFNGNSFTSYKDSADRTTRVNFNAKNISIDNFVEINNRVGSGAGRKASSTVLTLQASEGITSSKNAEISLYDGATLNLASNSVKLNGNVWMGRLQYVGAYLAPSYSTINTSKVQGEVDFNHLTVGDQNAAQAGIIASNKTHIGTLDLWQSAGLNIIAPPEGGYKDKPNSTTSQSGTKNDKKEISQNNNSNTEVINPPNNTQKTETEPTQVIDGPFAGGKDTVVNIFHLNTKADGTIKVGGFKASLTTNAAHLNIGKGGVNLSNQASGRTLLVENLTGNITVDGPLRVNNQVGGYALAGSSANFEFKAGVDTKNGTATFNNDISLGRFVNLKVDAHTANFKGIDTGNGGFNTLDFSGVTDKVNINKLITASTNVAVKNFNINELIVKTNGISVGEYTHFSEDIGSQSRINTVRLETGTRSIFSGGVKFKSGEKLVINDFYYSPWNYFDARNVKNVEITRKFASSTPENPWGTSKLMFNNLTLGQNAVMDYSQFSNLTIQGDFINNQGTINYLVRGGKVATLNVGNAAAMMFNNDIDSATGFYKPLIKINSAQDLIKNTEHVLLKAKIIGYGNVSTGTNGISNVNLEEQFKERLALYNNNNRMDTCVVRNTDDIKACGMAIGNQSMVNNPDNYKYLIGKAWRNIGISKTANGSKISVYYLGNSTPTENGGNTTNLPTNTTNNAHSANYALVKNAPFAHSATPNLVAINQHDFGTIESVFELANRSKDIDTLYTHSGAQGRDLLQTLLIDSHDAGYARQMIDNTSTGEITKQLNAATDALNNVASLEHKQSGLQTLSLSNAMILNSRLVNLSRKHTNHINSFAQRLQALKGQEFASLESAAEVLYQFAPKYEKPTNVWANAIGGASLNSGSNASLYGTSAGVDAFLNGNVEAIVGGFGSYGYSSFSNQANSLNSGANNANFGVYSRFFANQHEFDFEAQGALGSDQSSLNFKSTLLQDLNQSYNYLAYSATARASYGYDFAFFRNALVLKPSVGVSYNHLGSTNFKSNSQSQVALKNGASSQHLFNANANVEARYYYGDTSYFYLHAGVLQEFAHFGSNDVASLNTFKINAARSPLSTYARAMMGGELQLAKEVFLNLGVVYLHNLISNASHFASNLGMRYSF</sequence>
<evidence type="ECO:0000250" key="1"/>
<evidence type="ECO:0000255" key="2"/>
<evidence type="ECO:0000255" key="3">
    <source>
        <dbReference type="PROSITE-ProRule" id="PRU00556"/>
    </source>
</evidence>
<evidence type="ECO:0000256" key="4">
    <source>
        <dbReference type="SAM" id="MobiDB-lite"/>
    </source>
</evidence>
<name>VACA_HELPJ</name>
<gene>
    <name type="primary">vacA</name>
    <name type="ordered locus">jhp_0819</name>
</gene>
<comment type="function">
    <text>Induces vacuolation of eukaryotic cells. Causes ulceration and gastric lesions.</text>
</comment>
<comment type="subcellular location">
    <molecule>Vacuolating cytotoxin autotransporter</molecule>
    <subcellularLocation>
        <location evidence="1">Periplasm</location>
    </subcellularLocation>
</comment>
<comment type="subcellular location">
    <molecule>Vacuolating cytotoxin</molecule>
    <subcellularLocation>
        <location>Secreted</location>
    </subcellularLocation>
    <subcellularLocation>
        <location>Cell surface</location>
    </subcellularLocation>
</comment>
<comment type="subcellular location">
    <molecule>Vacuolating cytotoxin translocator</molecule>
    <subcellularLocation>
        <location evidence="1">Cell outer membrane</location>
        <topology evidence="1">Multi-pass membrane protein</topology>
    </subcellularLocation>
    <text evidence="1">The cleaved C-terminal fragment (autotransporter domain) is localized in the outer membrane.</text>
</comment>
<comment type="domain">
    <text evidence="1">The signal peptide, cleaved at the inner membrane, guides the autotransporter protein to the periplasmic space. Then, insertion of the C-terminal translocator domain in the outer membrane forms a hydrophilic pore for the translocation of the passenger domain to the bacterial cell surface, with subsequent cleavage (By similarity).</text>
</comment>
<dbReference type="EMBL" id="AE001439">
    <property type="protein sequence ID" value="AAD06400.1"/>
    <property type="molecule type" value="Genomic_DNA"/>
</dbReference>
<dbReference type="PIR" id="E71884">
    <property type="entry name" value="E71884"/>
</dbReference>
<dbReference type="RefSeq" id="WP_000405515.1">
    <property type="nucleotide sequence ID" value="NC_000921.1"/>
</dbReference>
<dbReference type="SMR" id="Q9ZKW5"/>
<dbReference type="KEGG" id="hpj:jhp_0819"/>
<dbReference type="Proteomes" id="UP000000804">
    <property type="component" value="Chromosome"/>
</dbReference>
<dbReference type="GO" id="GO:0009279">
    <property type="term" value="C:cell outer membrane"/>
    <property type="evidence" value="ECO:0007669"/>
    <property type="project" value="UniProtKB-SubCell"/>
</dbReference>
<dbReference type="GO" id="GO:0009986">
    <property type="term" value="C:cell surface"/>
    <property type="evidence" value="ECO:0007669"/>
    <property type="project" value="UniProtKB-SubCell"/>
</dbReference>
<dbReference type="GO" id="GO:0005576">
    <property type="term" value="C:extracellular region"/>
    <property type="evidence" value="ECO:0007669"/>
    <property type="project" value="UniProtKB-SubCell"/>
</dbReference>
<dbReference type="GO" id="GO:0042597">
    <property type="term" value="C:periplasmic space"/>
    <property type="evidence" value="ECO:0007669"/>
    <property type="project" value="UniProtKB-SubCell"/>
</dbReference>
<dbReference type="GO" id="GO:0090729">
    <property type="term" value="F:toxin activity"/>
    <property type="evidence" value="ECO:0007669"/>
    <property type="project" value="UniProtKB-KW"/>
</dbReference>
<dbReference type="Gene3D" id="2.40.128.130">
    <property type="entry name" value="Autotransporter beta-domain"/>
    <property type="match status" value="1"/>
</dbReference>
<dbReference type="InterPro" id="IPR005546">
    <property type="entry name" value="Autotransporte_beta"/>
</dbReference>
<dbReference type="InterPro" id="IPR036709">
    <property type="entry name" value="Autotransporte_beta_dom_sf"/>
</dbReference>
<dbReference type="InterPro" id="IPR006315">
    <property type="entry name" value="OM_autotransptr_brl_dom"/>
</dbReference>
<dbReference type="InterPro" id="IPR003842">
    <property type="entry name" value="Vacuolating_cytotoxin"/>
</dbReference>
<dbReference type="NCBIfam" id="TIGR01414">
    <property type="entry name" value="autotrans_barl"/>
    <property type="match status" value="1"/>
</dbReference>
<dbReference type="Pfam" id="PF02691">
    <property type="entry name" value="VacA"/>
    <property type="match status" value="1"/>
</dbReference>
<dbReference type="PRINTS" id="PR01656">
    <property type="entry name" value="VACCYTOTOXIN"/>
</dbReference>
<dbReference type="SMART" id="SM00869">
    <property type="entry name" value="Autotransporter"/>
    <property type="match status" value="1"/>
</dbReference>
<dbReference type="SUPFAM" id="SSF103515">
    <property type="entry name" value="Autotransporter"/>
    <property type="match status" value="1"/>
</dbReference>
<dbReference type="PROSITE" id="PS51208">
    <property type="entry name" value="AUTOTRANSPORTER"/>
    <property type="match status" value="1"/>
</dbReference>
<organism>
    <name type="scientific">Helicobacter pylori (strain J99 / ATCC 700824)</name>
    <name type="common">Campylobacter pylori J99</name>
    <dbReference type="NCBI Taxonomy" id="85963"/>
    <lineage>
        <taxon>Bacteria</taxon>
        <taxon>Pseudomonadati</taxon>
        <taxon>Campylobacterota</taxon>
        <taxon>Epsilonproteobacteria</taxon>
        <taxon>Campylobacterales</taxon>
        <taxon>Helicobacteraceae</taxon>
        <taxon>Helicobacter</taxon>
    </lineage>
</organism>
<protein>
    <recommendedName>
        <fullName>Vacuolating cytotoxin autotransporter</fullName>
    </recommendedName>
    <component>
        <recommendedName>
            <fullName>Vacuolating cytotoxin</fullName>
        </recommendedName>
    </component>
    <component>
        <recommendedName>
            <fullName>Vacuolating cytotoxin translocator</fullName>
        </recommendedName>
    </component>
</protein>